<proteinExistence type="inferred from homology"/>
<comment type="function">
    <text evidence="1">Bifunctional serine/threonine kinase and phosphorylase involved in the regulation of the phosphoenolpyruvate synthase (PEPS) by catalyzing its phosphorylation/dephosphorylation.</text>
</comment>
<comment type="catalytic activity">
    <reaction evidence="1">
        <text>[pyruvate, water dikinase] + ADP = [pyruvate, water dikinase]-phosphate + AMP + H(+)</text>
        <dbReference type="Rhea" id="RHEA:46020"/>
        <dbReference type="Rhea" id="RHEA-COMP:11425"/>
        <dbReference type="Rhea" id="RHEA-COMP:11426"/>
        <dbReference type="ChEBI" id="CHEBI:15378"/>
        <dbReference type="ChEBI" id="CHEBI:43176"/>
        <dbReference type="ChEBI" id="CHEBI:68546"/>
        <dbReference type="ChEBI" id="CHEBI:456215"/>
        <dbReference type="ChEBI" id="CHEBI:456216"/>
        <dbReference type="EC" id="2.7.11.33"/>
    </reaction>
</comment>
<comment type="catalytic activity">
    <reaction evidence="1">
        <text>[pyruvate, water dikinase]-phosphate + phosphate + H(+) = [pyruvate, water dikinase] + diphosphate</text>
        <dbReference type="Rhea" id="RHEA:48580"/>
        <dbReference type="Rhea" id="RHEA-COMP:11425"/>
        <dbReference type="Rhea" id="RHEA-COMP:11426"/>
        <dbReference type="ChEBI" id="CHEBI:15378"/>
        <dbReference type="ChEBI" id="CHEBI:33019"/>
        <dbReference type="ChEBI" id="CHEBI:43176"/>
        <dbReference type="ChEBI" id="CHEBI:43474"/>
        <dbReference type="ChEBI" id="CHEBI:68546"/>
        <dbReference type="EC" id="2.7.4.28"/>
    </reaction>
</comment>
<comment type="similarity">
    <text evidence="1">Belongs to the pyruvate, phosphate/water dikinase regulatory protein family. PSRP subfamily.</text>
</comment>
<accession>Q2NT22</accession>
<evidence type="ECO:0000255" key="1">
    <source>
        <dbReference type="HAMAP-Rule" id="MF_01062"/>
    </source>
</evidence>
<organism>
    <name type="scientific">Sodalis glossinidius (strain morsitans)</name>
    <dbReference type="NCBI Taxonomy" id="343509"/>
    <lineage>
        <taxon>Bacteria</taxon>
        <taxon>Pseudomonadati</taxon>
        <taxon>Pseudomonadota</taxon>
        <taxon>Gammaproteobacteria</taxon>
        <taxon>Enterobacterales</taxon>
        <taxon>Bruguierivoracaceae</taxon>
        <taxon>Sodalis</taxon>
    </lineage>
</organism>
<reference key="1">
    <citation type="journal article" date="2006" name="Genome Res.">
        <title>Massive genome erosion and functional adaptations provide insights into the symbiotic lifestyle of Sodalis glossinidius in the tsetse host.</title>
        <authorList>
            <person name="Toh H."/>
            <person name="Weiss B.L."/>
            <person name="Perkin S.A.H."/>
            <person name="Yamashita A."/>
            <person name="Oshima K."/>
            <person name="Hattori M."/>
            <person name="Aksoy S."/>
        </authorList>
    </citation>
    <scope>NUCLEOTIDE SEQUENCE [LARGE SCALE GENOMIC DNA]</scope>
    <source>
        <strain>morsitans</strain>
    </source>
</reference>
<sequence length="273" mass="30416">MERSVFFISDGTAITAEVVGHSVLSQFPLTTALYTLPFVESETRARAVREQINALYQQSGVRPLVFYSIVTPAVRHIIEESAGFCQDVVQALVGPLQQELGIAPDPVAHRTHGLTATNLSKYDARITAIDYTLAHDDGISLRNLDQAQIILLGVSRCGKTPTSLYLAMQYGIRAANYPFIADDMDNLSLPAALKAHQPKLFGLTIDPERLAAIRDERLSDSRYASLRQCRMEINEVESLFRNNNIRYLNSTNHSVEEIAAKIMDVLGMSRRMY</sequence>
<dbReference type="EC" id="2.7.11.33" evidence="1"/>
<dbReference type="EC" id="2.7.4.28" evidence="1"/>
<dbReference type="EMBL" id="AP008232">
    <property type="protein sequence ID" value="BAE74703.1"/>
    <property type="molecule type" value="Genomic_DNA"/>
</dbReference>
<dbReference type="RefSeq" id="WP_011411248.1">
    <property type="nucleotide sequence ID" value="NC_007712.1"/>
</dbReference>
<dbReference type="SMR" id="Q2NT22"/>
<dbReference type="STRING" id="343509.SG1428"/>
<dbReference type="KEGG" id="sgl:SG1428"/>
<dbReference type="eggNOG" id="COG1806">
    <property type="taxonomic scope" value="Bacteria"/>
</dbReference>
<dbReference type="HOGENOM" id="CLU_046206_1_0_6"/>
<dbReference type="OrthoDB" id="9782201at2"/>
<dbReference type="BioCyc" id="SGLO343509:SGP1_RS12665-MONOMER"/>
<dbReference type="Proteomes" id="UP000001932">
    <property type="component" value="Chromosome"/>
</dbReference>
<dbReference type="GO" id="GO:0043531">
    <property type="term" value="F:ADP binding"/>
    <property type="evidence" value="ECO:0007669"/>
    <property type="project" value="UniProtKB-UniRule"/>
</dbReference>
<dbReference type="GO" id="GO:0005524">
    <property type="term" value="F:ATP binding"/>
    <property type="evidence" value="ECO:0007669"/>
    <property type="project" value="InterPro"/>
</dbReference>
<dbReference type="GO" id="GO:0016776">
    <property type="term" value="F:phosphotransferase activity, phosphate group as acceptor"/>
    <property type="evidence" value="ECO:0007669"/>
    <property type="project" value="UniProtKB-UniRule"/>
</dbReference>
<dbReference type="GO" id="GO:0004674">
    <property type="term" value="F:protein serine/threonine kinase activity"/>
    <property type="evidence" value="ECO:0007669"/>
    <property type="project" value="UniProtKB-UniRule"/>
</dbReference>
<dbReference type="HAMAP" id="MF_01062">
    <property type="entry name" value="PSRP"/>
    <property type="match status" value="1"/>
</dbReference>
<dbReference type="InterPro" id="IPR005177">
    <property type="entry name" value="Kinase-pyrophosphorylase"/>
</dbReference>
<dbReference type="InterPro" id="IPR026530">
    <property type="entry name" value="PSRP"/>
</dbReference>
<dbReference type="NCBIfam" id="NF003742">
    <property type="entry name" value="PRK05339.1"/>
    <property type="match status" value="1"/>
</dbReference>
<dbReference type="PANTHER" id="PTHR31756">
    <property type="entry name" value="PYRUVATE, PHOSPHATE DIKINASE REGULATORY PROTEIN 1, CHLOROPLASTIC"/>
    <property type="match status" value="1"/>
</dbReference>
<dbReference type="PANTHER" id="PTHR31756:SF3">
    <property type="entry name" value="PYRUVATE, PHOSPHATE DIKINASE REGULATORY PROTEIN 1, CHLOROPLASTIC"/>
    <property type="match status" value="1"/>
</dbReference>
<dbReference type="Pfam" id="PF03618">
    <property type="entry name" value="Kinase-PPPase"/>
    <property type="match status" value="1"/>
</dbReference>
<protein>
    <recommendedName>
        <fullName evidence="1">Putative phosphoenolpyruvate synthase regulatory protein</fullName>
        <shortName evidence="1">PEP synthase regulatory protein</shortName>
        <shortName evidence="1">PSRP</shortName>
        <ecNumber evidence="1">2.7.11.33</ecNumber>
        <ecNumber evidence="1">2.7.4.28</ecNumber>
    </recommendedName>
    <alternativeName>
        <fullName evidence="1">Pyruvate, water dikinase regulatory protein</fullName>
    </alternativeName>
</protein>
<gene>
    <name type="ordered locus">SG1428</name>
</gene>
<feature type="chain" id="PRO_0000316744" description="Putative phosphoenolpyruvate synthase regulatory protein">
    <location>
        <begin position="1"/>
        <end position="273"/>
    </location>
</feature>
<feature type="binding site" evidence="1">
    <location>
        <begin position="153"/>
        <end position="160"/>
    </location>
    <ligand>
        <name>ADP</name>
        <dbReference type="ChEBI" id="CHEBI:456216"/>
    </ligand>
</feature>
<name>PSRP_SODGM</name>
<keyword id="KW-0418">Kinase</keyword>
<keyword id="KW-0547">Nucleotide-binding</keyword>
<keyword id="KW-0723">Serine/threonine-protein kinase</keyword>
<keyword id="KW-0808">Transferase</keyword>